<organism>
    <name type="scientific">Synechococcus sp. (strain WH7803)</name>
    <dbReference type="NCBI Taxonomy" id="32051"/>
    <lineage>
        <taxon>Bacteria</taxon>
        <taxon>Bacillati</taxon>
        <taxon>Cyanobacteriota</taxon>
        <taxon>Cyanophyceae</taxon>
        <taxon>Synechococcales</taxon>
        <taxon>Synechococcaceae</taxon>
        <taxon>Synechococcus</taxon>
    </lineage>
</organism>
<sequence length="331" mass="35802">MAQLFYDTDADLSLLSGKTVAIVGYGSQGHAHALNLKDSGVDVVVGLYEGSRSAEKAKADGLEVLSVAEAAERADWIMVLLPDEFQKDVYAKEIAPHLKAGKVLSFAHGFNIRFGLIKPPADVDVVMIAPKGPGHTVRWEYQNGQGVPALFAIEQDASGNARGLAMAYAKGIGGTRAGILETNFKEETETDLFGEQAVLCGGLSELVKAGFETLVEAGYQPELAYFECLHEVKLIVDLMVKGGLSAMRDSISNTAEYGDYVSGPRLITADTKAEMKRILGDIQDGTFAKNFVAECEAGKPEMNKIREQDRHHKIEEVGKGLRSMFSWLKAS</sequence>
<feature type="chain" id="PRO_1000050583" description="Ketol-acid reductoisomerase (NADP(+))">
    <location>
        <begin position="1"/>
        <end position="331"/>
    </location>
</feature>
<feature type="domain" description="KARI N-terminal Rossmann" evidence="2">
    <location>
        <begin position="2"/>
        <end position="182"/>
    </location>
</feature>
<feature type="domain" description="KARI C-terminal knotted" evidence="3">
    <location>
        <begin position="183"/>
        <end position="328"/>
    </location>
</feature>
<feature type="active site" evidence="1">
    <location>
        <position position="108"/>
    </location>
</feature>
<feature type="binding site" evidence="1">
    <location>
        <begin position="25"/>
        <end position="28"/>
    </location>
    <ligand>
        <name>NADP(+)</name>
        <dbReference type="ChEBI" id="CHEBI:58349"/>
    </ligand>
</feature>
<feature type="binding site" evidence="1">
    <location>
        <position position="51"/>
    </location>
    <ligand>
        <name>NADP(+)</name>
        <dbReference type="ChEBI" id="CHEBI:58349"/>
    </ligand>
</feature>
<feature type="binding site" evidence="1">
    <location>
        <position position="53"/>
    </location>
    <ligand>
        <name>NADP(+)</name>
        <dbReference type="ChEBI" id="CHEBI:58349"/>
    </ligand>
</feature>
<feature type="binding site" evidence="1">
    <location>
        <begin position="83"/>
        <end position="86"/>
    </location>
    <ligand>
        <name>NADP(+)</name>
        <dbReference type="ChEBI" id="CHEBI:58349"/>
    </ligand>
</feature>
<feature type="binding site" evidence="1">
    <location>
        <position position="134"/>
    </location>
    <ligand>
        <name>NADP(+)</name>
        <dbReference type="ChEBI" id="CHEBI:58349"/>
    </ligand>
</feature>
<feature type="binding site" evidence="1">
    <location>
        <position position="191"/>
    </location>
    <ligand>
        <name>Mg(2+)</name>
        <dbReference type="ChEBI" id="CHEBI:18420"/>
        <label>1</label>
    </ligand>
</feature>
<feature type="binding site" evidence="1">
    <location>
        <position position="191"/>
    </location>
    <ligand>
        <name>Mg(2+)</name>
        <dbReference type="ChEBI" id="CHEBI:18420"/>
        <label>2</label>
    </ligand>
</feature>
<feature type="binding site" evidence="1">
    <location>
        <position position="195"/>
    </location>
    <ligand>
        <name>Mg(2+)</name>
        <dbReference type="ChEBI" id="CHEBI:18420"/>
        <label>1</label>
    </ligand>
</feature>
<feature type="binding site" evidence="1">
    <location>
        <position position="227"/>
    </location>
    <ligand>
        <name>Mg(2+)</name>
        <dbReference type="ChEBI" id="CHEBI:18420"/>
        <label>2</label>
    </ligand>
</feature>
<feature type="binding site" evidence="1">
    <location>
        <position position="231"/>
    </location>
    <ligand>
        <name>Mg(2+)</name>
        <dbReference type="ChEBI" id="CHEBI:18420"/>
        <label>2</label>
    </ligand>
</feature>
<feature type="binding site" evidence="1">
    <location>
        <position position="252"/>
    </location>
    <ligand>
        <name>substrate</name>
    </ligand>
</feature>
<name>ILVC_SYNPW</name>
<evidence type="ECO:0000255" key="1">
    <source>
        <dbReference type="HAMAP-Rule" id="MF_00435"/>
    </source>
</evidence>
<evidence type="ECO:0000255" key="2">
    <source>
        <dbReference type="PROSITE-ProRule" id="PRU01197"/>
    </source>
</evidence>
<evidence type="ECO:0000255" key="3">
    <source>
        <dbReference type="PROSITE-ProRule" id="PRU01198"/>
    </source>
</evidence>
<dbReference type="EC" id="1.1.1.86" evidence="1"/>
<dbReference type="EMBL" id="CT971583">
    <property type="protein sequence ID" value="CAK24191.1"/>
    <property type="molecule type" value="Genomic_DNA"/>
</dbReference>
<dbReference type="SMR" id="A5GMM6"/>
<dbReference type="STRING" id="32051.SynWH7803_1765"/>
<dbReference type="KEGG" id="syx:SynWH7803_1765"/>
<dbReference type="eggNOG" id="COG0059">
    <property type="taxonomic scope" value="Bacteria"/>
</dbReference>
<dbReference type="HOGENOM" id="CLU_033821_0_1_3"/>
<dbReference type="OrthoDB" id="9804088at2"/>
<dbReference type="UniPathway" id="UPA00047">
    <property type="reaction ID" value="UER00056"/>
</dbReference>
<dbReference type="UniPathway" id="UPA00049">
    <property type="reaction ID" value="UER00060"/>
</dbReference>
<dbReference type="Proteomes" id="UP000001566">
    <property type="component" value="Chromosome"/>
</dbReference>
<dbReference type="GO" id="GO:0005829">
    <property type="term" value="C:cytosol"/>
    <property type="evidence" value="ECO:0007669"/>
    <property type="project" value="TreeGrafter"/>
</dbReference>
<dbReference type="GO" id="GO:0004455">
    <property type="term" value="F:ketol-acid reductoisomerase activity"/>
    <property type="evidence" value="ECO:0007669"/>
    <property type="project" value="UniProtKB-UniRule"/>
</dbReference>
<dbReference type="GO" id="GO:0000287">
    <property type="term" value="F:magnesium ion binding"/>
    <property type="evidence" value="ECO:0007669"/>
    <property type="project" value="UniProtKB-UniRule"/>
</dbReference>
<dbReference type="GO" id="GO:0050661">
    <property type="term" value="F:NADP binding"/>
    <property type="evidence" value="ECO:0007669"/>
    <property type="project" value="InterPro"/>
</dbReference>
<dbReference type="GO" id="GO:0009097">
    <property type="term" value="P:isoleucine biosynthetic process"/>
    <property type="evidence" value="ECO:0007669"/>
    <property type="project" value="UniProtKB-UniRule"/>
</dbReference>
<dbReference type="GO" id="GO:0009099">
    <property type="term" value="P:L-valine biosynthetic process"/>
    <property type="evidence" value="ECO:0007669"/>
    <property type="project" value="UniProtKB-UniRule"/>
</dbReference>
<dbReference type="FunFam" id="3.40.50.720:FF:000023">
    <property type="entry name" value="Ketol-acid reductoisomerase (NADP(+))"/>
    <property type="match status" value="1"/>
</dbReference>
<dbReference type="Gene3D" id="6.10.240.10">
    <property type="match status" value="1"/>
</dbReference>
<dbReference type="Gene3D" id="3.40.50.720">
    <property type="entry name" value="NAD(P)-binding Rossmann-like Domain"/>
    <property type="match status" value="1"/>
</dbReference>
<dbReference type="HAMAP" id="MF_00435">
    <property type="entry name" value="IlvC"/>
    <property type="match status" value="1"/>
</dbReference>
<dbReference type="InterPro" id="IPR008927">
    <property type="entry name" value="6-PGluconate_DH-like_C_sf"/>
</dbReference>
<dbReference type="InterPro" id="IPR013023">
    <property type="entry name" value="KARI"/>
</dbReference>
<dbReference type="InterPro" id="IPR000506">
    <property type="entry name" value="KARI_C"/>
</dbReference>
<dbReference type="InterPro" id="IPR013116">
    <property type="entry name" value="KARI_N"/>
</dbReference>
<dbReference type="InterPro" id="IPR014359">
    <property type="entry name" value="KARI_prok"/>
</dbReference>
<dbReference type="InterPro" id="IPR036291">
    <property type="entry name" value="NAD(P)-bd_dom_sf"/>
</dbReference>
<dbReference type="NCBIfam" id="TIGR00465">
    <property type="entry name" value="ilvC"/>
    <property type="match status" value="1"/>
</dbReference>
<dbReference type="NCBIfam" id="NF004017">
    <property type="entry name" value="PRK05479.1"/>
    <property type="match status" value="1"/>
</dbReference>
<dbReference type="NCBIfam" id="NF009940">
    <property type="entry name" value="PRK13403.1"/>
    <property type="match status" value="1"/>
</dbReference>
<dbReference type="PANTHER" id="PTHR21371">
    <property type="entry name" value="KETOL-ACID REDUCTOISOMERASE, MITOCHONDRIAL"/>
    <property type="match status" value="1"/>
</dbReference>
<dbReference type="PANTHER" id="PTHR21371:SF1">
    <property type="entry name" value="KETOL-ACID REDUCTOISOMERASE, MITOCHONDRIAL"/>
    <property type="match status" value="1"/>
</dbReference>
<dbReference type="Pfam" id="PF01450">
    <property type="entry name" value="KARI_C"/>
    <property type="match status" value="1"/>
</dbReference>
<dbReference type="Pfam" id="PF07991">
    <property type="entry name" value="KARI_N"/>
    <property type="match status" value="1"/>
</dbReference>
<dbReference type="PIRSF" id="PIRSF000116">
    <property type="entry name" value="IlvC_gammaproteo"/>
    <property type="match status" value="1"/>
</dbReference>
<dbReference type="SUPFAM" id="SSF48179">
    <property type="entry name" value="6-phosphogluconate dehydrogenase C-terminal domain-like"/>
    <property type="match status" value="1"/>
</dbReference>
<dbReference type="SUPFAM" id="SSF51735">
    <property type="entry name" value="NAD(P)-binding Rossmann-fold domains"/>
    <property type="match status" value="1"/>
</dbReference>
<dbReference type="PROSITE" id="PS51851">
    <property type="entry name" value="KARI_C"/>
    <property type="match status" value="1"/>
</dbReference>
<dbReference type="PROSITE" id="PS51850">
    <property type="entry name" value="KARI_N"/>
    <property type="match status" value="1"/>
</dbReference>
<comment type="function">
    <text evidence="1">Involved in the biosynthesis of branched-chain amino acids (BCAA). Catalyzes an alkyl-migration followed by a ketol-acid reduction of (S)-2-acetolactate (S2AL) to yield (R)-2,3-dihydroxy-isovalerate. In the isomerase reaction, S2AL is rearranged via a Mg-dependent methyl migration to produce 3-hydroxy-3-methyl-2-ketobutyrate (HMKB). In the reductase reaction, this 2-ketoacid undergoes a metal-dependent reduction by NADPH to yield (R)-2,3-dihydroxy-isovalerate.</text>
</comment>
<comment type="catalytic activity">
    <reaction evidence="1">
        <text>(2R)-2,3-dihydroxy-3-methylbutanoate + NADP(+) = (2S)-2-acetolactate + NADPH + H(+)</text>
        <dbReference type="Rhea" id="RHEA:22068"/>
        <dbReference type="ChEBI" id="CHEBI:15378"/>
        <dbReference type="ChEBI" id="CHEBI:49072"/>
        <dbReference type="ChEBI" id="CHEBI:57783"/>
        <dbReference type="ChEBI" id="CHEBI:58349"/>
        <dbReference type="ChEBI" id="CHEBI:58476"/>
        <dbReference type="EC" id="1.1.1.86"/>
    </reaction>
</comment>
<comment type="catalytic activity">
    <reaction evidence="1">
        <text>(2R,3R)-2,3-dihydroxy-3-methylpentanoate + NADP(+) = (S)-2-ethyl-2-hydroxy-3-oxobutanoate + NADPH + H(+)</text>
        <dbReference type="Rhea" id="RHEA:13493"/>
        <dbReference type="ChEBI" id="CHEBI:15378"/>
        <dbReference type="ChEBI" id="CHEBI:49256"/>
        <dbReference type="ChEBI" id="CHEBI:49258"/>
        <dbReference type="ChEBI" id="CHEBI:57783"/>
        <dbReference type="ChEBI" id="CHEBI:58349"/>
        <dbReference type="EC" id="1.1.1.86"/>
    </reaction>
</comment>
<comment type="cofactor">
    <cofactor evidence="1">
        <name>Mg(2+)</name>
        <dbReference type="ChEBI" id="CHEBI:18420"/>
    </cofactor>
    <text evidence="1">Binds 2 magnesium ions per subunit.</text>
</comment>
<comment type="pathway">
    <text evidence="1">Amino-acid biosynthesis; L-isoleucine biosynthesis; L-isoleucine from 2-oxobutanoate: step 2/4.</text>
</comment>
<comment type="pathway">
    <text evidence="1">Amino-acid biosynthesis; L-valine biosynthesis; L-valine from pyruvate: step 2/4.</text>
</comment>
<comment type="similarity">
    <text evidence="1">Belongs to the ketol-acid reductoisomerase family.</text>
</comment>
<accession>A5GMM6</accession>
<keyword id="KW-0028">Amino-acid biosynthesis</keyword>
<keyword id="KW-0100">Branched-chain amino acid biosynthesis</keyword>
<keyword id="KW-0460">Magnesium</keyword>
<keyword id="KW-0479">Metal-binding</keyword>
<keyword id="KW-0521">NADP</keyword>
<keyword id="KW-0560">Oxidoreductase</keyword>
<keyword id="KW-1185">Reference proteome</keyword>
<gene>
    <name evidence="1" type="primary">ilvC</name>
    <name type="ordered locus">SynWH7803_1765</name>
</gene>
<protein>
    <recommendedName>
        <fullName evidence="1">Ketol-acid reductoisomerase (NADP(+))</fullName>
        <shortName evidence="1">KARI</shortName>
        <ecNumber evidence="1">1.1.1.86</ecNumber>
    </recommendedName>
    <alternativeName>
        <fullName evidence="1">Acetohydroxy-acid isomeroreductase</fullName>
        <shortName evidence="1">AHIR</shortName>
    </alternativeName>
    <alternativeName>
        <fullName evidence="1">Alpha-keto-beta-hydroxylacyl reductoisomerase</fullName>
    </alternativeName>
    <alternativeName>
        <fullName evidence="1">Ketol-acid reductoisomerase type 1</fullName>
    </alternativeName>
    <alternativeName>
        <fullName evidence="1">Ketol-acid reductoisomerase type I</fullName>
    </alternativeName>
</protein>
<reference key="1">
    <citation type="submission" date="2006-05" db="EMBL/GenBank/DDBJ databases">
        <authorList>
            <consortium name="Genoscope"/>
        </authorList>
    </citation>
    <scope>NUCLEOTIDE SEQUENCE [LARGE SCALE GENOMIC DNA]</scope>
    <source>
        <strain>WH7803</strain>
    </source>
</reference>
<proteinExistence type="inferred from homology"/>